<keyword id="KW-0030">Aminoacyl-tRNA synthetase</keyword>
<keyword id="KW-0067">ATP-binding</keyword>
<keyword id="KW-0963">Cytoplasm</keyword>
<keyword id="KW-0436">Ligase</keyword>
<keyword id="KW-0547">Nucleotide-binding</keyword>
<keyword id="KW-0648">Protein biosynthesis</keyword>
<keyword id="KW-1185">Reference proteome</keyword>
<gene>
    <name evidence="1" type="primary">hisS</name>
    <name type="ordered locus">LL1967</name>
    <name type="ORF">L0342</name>
</gene>
<comment type="catalytic activity">
    <reaction evidence="1">
        <text>tRNA(His) + L-histidine + ATP = L-histidyl-tRNA(His) + AMP + diphosphate + H(+)</text>
        <dbReference type="Rhea" id="RHEA:17313"/>
        <dbReference type="Rhea" id="RHEA-COMP:9665"/>
        <dbReference type="Rhea" id="RHEA-COMP:9689"/>
        <dbReference type="ChEBI" id="CHEBI:15378"/>
        <dbReference type="ChEBI" id="CHEBI:30616"/>
        <dbReference type="ChEBI" id="CHEBI:33019"/>
        <dbReference type="ChEBI" id="CHEBI:57595"/>
        <dbReference type="ChEBI" id="CHEBI:78442"/>
        <dbReference type="ChEBI" id="CHEBI:78527"/>
        <dbReference type="ChEBI" id="CHEBI:456215"/>
        <dbReference type="EC" id="6.1.1.21"/>
    </reaction>
</comment>
<comment type="subunit">
    <text evidence="1">Homodimer.</text>
</comment>
<comment type="subcellular location">
    <subcellularLocation>
        <location evidence="1">Cytoplasm</location>
    </subcellularLocation>
</comment>
<comment type="similarity">
    <text evidence="1">Belongs to the class-II aminoacyl-tRNA synthetase family.</text>
</comment>
<name>SYH_LACLA</name>
<accession>Q9CE78</accession>
<dbReference type="EC" id="6.1.1.21" evidence="1"/>
<dbReference type="EMBL" id="AE005176">
    <property type="protein sequence ID" value="AAK06065.1"/>
    <property type="molecule type" value="Genomic_DNA"/>
</dbReference>
<dbReference type="PIR" id="G86870">
    <property type="entry name" value="G86870"/>
</dbReference>
<dbReference type="RefSeq" id="NP_268124.1">
    <property type="nucleotide sequence ID" value="NC_002662.1"/>
</dbReference>
<dbReference type="RefSeq" id="WP_004254776.1">
    <property type="nucleotide sequence ID" value="NC_002662.1"/>
</dbReference>
<dbReference type="SMR" id="Q9CE78"/>
<dbReference type="PaxDb" id="272623-L0342"/>
<dbReference type="EnsemblBacteria" id="AAK06065">
    <property type="protein sequence ID" value="AAK06065"/>
    <property type="gene ID" value="L0342"/>
</dbReference>
<dbReference type="KEGG" id="lla:L0342"/>
<dbReference type="PATRIC" id="fig|272623.7.peg.2118"/>
<dbReference type="eggNOG" id="COG0124">
    <property type="taxonomic scope" value="Bacteria"/>
</dbReference>
<dbReference type="HOGENOM" id="CLU_025113_1_1_9"/>
<dbReference type="OrthoDB" id="9800814at2"/>
<dbReference type="Proteomes" id="UP000002196">
    <property type="component" value="Chromosome"/>
</dbReference>
<dbReference type="GO" id="GO:0005737">
    <property type="term" value="C:cytoplasm"/>
    <property type="evidence" value="ECO:0007669"/>
    <property type="project" value="UniProtKB-SubCell"/>
</dbReference>
<dbReference type="GO" id="GO:0005524">
    <property type="term" value="F:ATP binding"/>
    <property type="evidence" value="ECO:0007669"/>
    <property type="project" value="UniProtKB-UniRule"/>
</dbReference>
<dbReference type="GO" id="GO:0140096">
    <property type="term" value="F:catalytic activity, acting on a protein"/>
    <property type="evidence" value="ECO:0007669"/>
    <property type="project" value="UniProtKB-ARBA"/>
</dbReference>
<dbReference type="GO" id="GO:0004821">
    <property type="term" value="F:histidine-tRNA ligase activity"/>
    <property type="evidence" value="ECO:0007669"/>
    <property type="project" value="UniProtKB-UniRule"/>
</dbReference>
<dbReference type="GO" id="GO:0016740">
    <property type="term" value="F:transferase activity"/>
    <property type="evidence" value="ECO:0007669"/>
    <property type="project" value="UniProtKB-ARBA"/>
</dbReference>
<dbReference type="GO" id="GO:0006427">
    <property type="term" value="P:histidyl-tRNA aminoacylation"/>
    <property type="evidence" value="ECO:0007669"/>
    <property type="project" value="UniProtKB-UniRule"/>
</dbReference>
<dbReference type="CDD" id="cd00773">
    <property type="entry name" value="HisRS-like_core"/>
    <property type="match status" value="1"/>
</dbReference>
<dbReference type="CDD" id="cd00859">
    <property type="entry name" value="HisRS_anticodon"/>
    <property type="match status" value="1"/>
</dbReference>
<dbReference type="FunFam" id="3.30.930.10:FF:000005">
    <property type="entry name" value="Histidine--tRNA ligase"/>
    <property type="match status" value="1"/>
</dbReference>
<dbReference type="Gene3D" id="3.40.50.800">
    <property type="entry name" value="Anticodon-binding domain"/>
    <property type="match status" value="1"/>
</dbReference>
<dbReference type="Gene3D" id="3.30.930.10">
    <property type="entry name" value="Bira Bifunctional Protein, Domain 2"/>
    <property type="match status" value="1"/>
</dbReference>
<dbReference type="HAMAP" id="MF_00127">
    <property type="entry name" value="His_tRNA_synth"/>
    <property type="match status" value="1"/>
</dbReference>
<dbReference type="InterPro" id="IPR006195">
    <property type="entry name" value="aa-tRNA-synth_II"/>
</dbReference>
<dbReference type="InterPro" id="IPR045864">
    <property type="entry name" value="aa-tRNA-synth_II/BPL/LPL"/>
</dbReference>
<dbReference type="InterPro" id="IPR004154">
    <property type="entry name" value="Anticodon-bd"/>
</dbReference>
<dbReference type="InterPro" id="IPR036621">
    <property type="entry name" value="Anticodon-bd_dom_sf"/>
</dbReference>
<dbReference type="InterPro" id="IPR015807">
    <property type="entry name" value="His-tRNA-ligase"/>
</dbReference>
<dbReference type="InterPro" id="IPR041715">
    <property type="entry name" value="HisRS-like_core"/>
</dbReference>
<dbReference type="InterPro" id="IPR004516">
    <property type="entry name" value="HisRS/HisZ"/>
</dbReference>
<dbReference type="InterPro" id="IPR033656">
    <property type="entry name" value="HisRS_anticodon"/>
</dbReference>
<dbReference type="NCBIfam" id="TIGR00442">
    <property type="entry name" value="hisS"/>
    <property type="match status" value="1"/>
</dbReference>
<dbReference type="PANTHER" id="PTHR43707:SF1">
    <property type="entry name" value="HISTIDINE--TRNA LIGASE, MITOCHONDRIAL-RELATED"/>
    <property type="match status" value="1"/>
</dbReference>
<dbReference type="PANTHER" id="PTHR43707">
    <property type="entry name" value="HISTIDYL-TRNA SYNTHETASE"/>
    <property type="match status" value="1"/>
</dbReference>
<dbReference type="Pfam" id="PF03129">
    <property type="entry name" value="HGTP_anticodon"/>
    <property type="match status" value="1"/>
</dbReference>
<dbReference type="Pfam" id="PF13393">
    <property type="entry name" value="tRNA-synt_His"/>
    <property type="match status" value="1"/>
</dbReference>
<dbReference type="PIRSF" id="PIRSF001549">
    <property type="entry name" value="His-tRNA_synth"/>
    <property type="match status" value="1"/>
</dbReference>
<dbReference type="SUPFAM" id="SSF52954">
    <property type="entry name" value="Class II aaRS ABD-related"/>
    <property type="match status" value="1"/>
</dbReference>
<dbReference type="SUPFAM" id="SSF55681">
    <property type="entry name" value="Class II aaRS and biotin synthetases"/>
    <property type="match status" value="1"/>
</dbReference>
<dbReference type="PROSITE" id="PS50862">
    <property type="entry name" value="AA_TRNA_LIGASE_II"/>
    <property type="match status" value="1"/>
</dbReference>
<sequence length="430" mass="49004">MKLQKPKGTADLLPAETAKWQYIEEIARGVFNDYNFKEIRTPMFESYELFSRATGETSDIVTKEMYDFEDKGGRHIALRPEGTASAVRAYIENKLYAPEVVKPVKLWYDAPMFRYERPQSGRLRQFHQFGVECLGVKNPAVDVEIIAMADTLFRQLGITGLKLALNTLGDMESRMAYRQALIDYLTPFENQLSEDSRRRLNENPLRVLDSKEAEDIAIVKNAPAILDYLNEASKAYFEEVKALLEALHIEYTIDPNMVRGLDYYNDTIFEFIVDFDGKDLTVCGGGRYDGLVEYFDGPATPAFGFGLGIERLLMIAQKQEINFIPEETLDVYIAVMGEKANLEATKLAESLREQAFKVERDFSNRKLGAQFKTAEKLGAELIITLGEDEIRTGQIKVKHNQTRKQVETTLKAVHESFAPIFEEIYADEEL</sequence>
<reference key="1">
    <citation type="journal article" date="2001" name="Genome Res.">
        <title>The complete genome sequence of the lactic acid bacterium Lactococcus lactis ssp. lactis IL1403.</title>
        <authorList>
            <person name="Bolotin A."/>
            <person name="Wincker P."/>
            <person name="Mauger S."/>
            <person name="Jaillon O."/>
            <person name="Malarme K."/>
            <person name="Weissenbach J."/>
            <person name="Ehrlich S.D."/>
            <person name="Sorokin A."/>
        </authorList>
    </citation>
    <scope>NUCLEOTIDE SEQUENCE [LARGE SCALE GENOMIC DNA]</scope>
    <source>
        <strain>IL1403</strain>
    </source>
</reference>
<protein>
    <recommendedName>
        <fullName evidence="1">Histidine--tRNA ligase</fullName>
        <ecNumber evidence="1">6.1.1.21</ecNumber>
    </recommendedName>
    <alternativeName>
        <fullName evidence="1">Histidyl-tRNA synthetase</fullName>
        <shortName evidence="1">HisRS</shortName>
    </alternativeName>
</protein>
<evidence type="ECO:0000255" key="1">
    <source>
        <dbReference type="HAMAP-Rule" id="MF_00127"/>
    </source>
</evidence>
<organism>
    <name type="scientific">Lactococcus lactis subsp. lactis (strain IL1403)</name>
    <name type="common">Streptococcus lactis</name>
    <dbReference type="NCBI Taxonomy" id="272623"/>
    <lineage>
        <taxon>Bacteria</taxon>
        <taxon>Bacillati</taxon>
        <taxon>Bacillota</taxon>
        <taxon>Bacilli</taxon>
        <taxon>Lactobacillales</taxon>
        <taxon>Streptococcaceae</taxon>
        <taxon>Lactococcus</taxon>
    </lineage>
</organism>
<proteinExistence type="inferred from homology"/>
<feature type="chain" id="PRO_0000136180" description="Histidine--tRNA ligase">
    <location>
        <begin position="1"/>
        <end position="430"/>
    </location>
</feature>